<reference key="1">
    <citation type="journal article" date="1998" name="Gene">
        <title>Mapping of 41 chemotaxis, flagellar and motility genes to a single region of the Sinorhizobium meliloti chromosome.</title>
        <authorList>
            <person name="Sourjik V."/>
            <person name="Sterr W."/>
            <person name="Platzer J."/>
            <person name="Bos I."/>
            <person name="Haslbeck M."/>
            <person name="Schmitt R."/>
        </authorList>
    </citation>
    <scope>NUCLEOTIDE SEQUENCE [GENOMIC DNA]</scope>
    <source>
        <strain>RU11/001</strain>
    </source>
</reference>
<reference key="2">
    <citation type="journal article" date="2001" name="Proc. Natl. Acad. Sci. U.S.A.">
        <title>Analysis of the chromosome sequence of the legume symbiont Sinorhizobium meliloti strain 1021.</title>
        <authorList>
            <person name="Capela D."/>
            <person name="Barloy-Hubler F."/>
            <person name="Gouzy J."/>
            <person name="Bothe G."/>
            <person name="Ampe F."/>
            <person name="Batut J."/>
            <person name="Boistard P."/>
            <person name="Becker A."/>
            <person name="Boutry M."/>
            <person name="Cadieu E."/>
            <person name="Dreano S."/>
            <person name="Gloux S."/>
            <person name="Godrie T."/>
            <person name="Goffeau A."/>
            <person name="Kahn D."/>
            <person name="Kiss E."/>
            <person name="Lelaure V."/>
            <person name="Masuy D."/>
            <person name="Pohl T."/>
            <person name="Portetelle D."/>
            <person name="Puehler A."/>
            <person name="Purnelle B."/>
            <person name="Ramsperger U."/>
            <person name="Renard C."/>
            <person name="Thebault P."/>
            <person name="Vandenbol M."/>
            <person name="Weidner S."/>
            <person name="Galibert F."/>
        </authorList>
    </citation>
    <scope>NUCLEOTIDE SEQUENCE [LARGE SCALE GENOMIC DNA]</scope>
    <source>
        <strain>1021</strain>
    </source>
</reference>
<reference key="3">
    <citation type="journal article" date="2001" name="Science">
        <title>The composite genome of the legume symbiont Sinorhizobium meliloti.</title>
        <authorList>
            <person name="Galibert F."/>
            <person name="Finan T.M."/>
            <person name="Long S.R."/>
            <person name="Puehler A."/>
            <person name="Abola P."/>
            <person name="Ampe F."/>
            <person name="Barloy-Hubler F."/>
            <person name="Barnett M.J."/>
            <person name="Becker A."/>
            <person name="Boistard P."/>
            <person name="Bothe G."/>
            <person name="Boutry M."/>
            <person name="Bowser L."/>
            <person name="Buhrmester J."/>
            <person name="Cadieu E."/>
            <person name="Capela D."/>
            <person name="Chain P."/>
            <person name="Cowie A."/>
            <person name="Davis R.W."/>
            <person name="Dreano S."/>
            <person name="Federspiel N.A."/>
            <person name="Fisher R.F."/>
            <person name="Gloux S."/>
            <person name="Godrie T."/>
            <person name="Goffeau A."/>
            <person name="Golding B."/>
            <person name="Gouzy J."/>
            <person name="Gurjal M."/>
            <person name="Hernandez-Lucas I."/>
            <person name="Hong A."/>
            <person name="Huizar L."/>
            <person name="Hyman R.W."/>
            <person name="Jones T."/>
            <person name="Kahn D."/>
            <person name="Kahn M.L."/>
            <person name="Kalman S."/>
            <person name="Keating D.H."/>
            <person name="Kiss E."/>
            <person name="Komp C."/>
            <person name="Lelaure V."/>
            <person name="Masuy D."/>
            <person name="Palm C."/>
            <person name="Peck M.C."/>
            <person name="Pohl T.M."/>
            <person name="Portetelle D."/>
            <person name="Purnelle B."/>
            <person name="Ramsperger U."/>
            <person name="Surzycki R."/>
            <person name="Thebault P."/>
            <person name="Vandenbol M."/>
            <person name="Vorhoelter F.J."/>
            <person name="Weidner S."/>
            <person name="Wells D.H."/>
            <person name="Wong K."/>
            <person name="Yeh K.-C."/>
            <person name="Batut J."/>
        </authorList>
    </citation>
    <scope>NUCLEOTIDE SEQUENCE [LARGE SCALE GENOMIC DNA]</scope>
    <source>
        <strain>1021</strain>
    </source>
</reference>
<reference key="4">
    <citation type="submission" date="1997-01" db="EMBL/GenBank/DDBJ databases">
        <authorList>
            <person name="Hazelbauer G.L."/>
            <person name="Daley I.J."/>
            <person name="Dutton D.P."/>
            <person name="Lilly A.A."/>
        </authorList>
    </citation>
    <scope>NUCLEOTIDE SEQUENCE [GENOMIC DNA] OF 1-217</scope>
    <source>
        <strain>RCR2011 / SU47</strain>
    </source>
</reference>
<dbReference type="EC" id="7.1.2.2"/>
<dbReference type="EMBL" id="AJ224445">
    <property type="protein sequence ID" value="CAA11957.1"/>
    <property type="molecule type" value="Genomic_DNA"/>
</dbReference>
<dbReference type="EMBL" id="AL591688">
    <property type="protein sequence ID" value="CAC45229.1"/>
    <property type="molecule type" value="Genomic_DNA"/>
</dbReference>
<dbReference type="EMBL" id="U87146">
    <property type="protein sequence ID" value="AAB48835.1"/>
    <property type="molecule type" value="Genomic_DNA"/>
</dbReference>
<dbReference type="RefSeq" id="NP_384763.1">
    <property type="nucleotide sequence ID" value="NC_003047.1"/>
</dbReference>
<dbReference type="RefSeq" id="WP_010968730.1">
    <property type="nucleotide sequence ID" value="NC_003047.1"/>
</dbReference>
<dbReference type="SMR" id="O54249"/>
<dbReference type="EnsemblBacteria" id="CAC45229">
    <property type="protein sequence ID" value="CAC45229"/>
    <property type="gene ID" value="SMc03025"/>
</dbReference>
<dbReference type="KEGG" id="sme:SMc03025"/>
<dbReference type="PATRIC" id="fig|266834.11.peg.2031"/>
<dbReference type="eggNOG" id="COG1157">
    <property type="taxonomic scope" value="Bacteria"/>
</dbReference>
<dbReference type="HOGENOM" id="CLU_022398_5_1_5"/>
<dbReference type="OrthoDB" id="9801639at2"/>
<dbReference type="Proteomes" id="UP000001976">
    <property type="component" value="Chromosome"/>
</dbReference>
<dbReference type="GO" id="GO:0009288">
    <property type="term" value="C:bacterial-type flagellum"/>
    <property type="evidence" value="ECO:0007669"/>
    <property type="project" value="InterPro"/>
</dbReference>
<dbReference type="GO" id="GO:0005737">
    <property type="term" value="C:cytoplasm"/>
    <property type="evidence" value="ECO:0007669"/>
    <property type="project" value="UniProtKB-SubCell"/>
</dbReference>
<dbReference type="GO" id="GO:0030257">
    <property type="term" value="C:type III protein secretion system complex"/>
    <property type="evidence" value="ECO:0007669"/>
    <property type="project" value="InterPro"/>
</dbReference>
<dbReference type="GO" id="GO:0005524">
    <property type="term" value="F:ATP binding"/>
    <property type="evidence" value="ECO:0007669"/>
    <property type="project" value="UniProtKB-KW"/>
</dbReference>
<dbReference type="GO" id="GO:0016887">
    <property type="term" value="F:ATP hydrolysis activity"/>
    <property type="evidence" value="ECO:0007669"/>
    <property type="project" value="InterPro"/>
</dbReference>
<dbReference type="GO" id="GO:0046933">
    <property type="term" value="F:proton-transporting ATP synthase activity, rotational mechanism"/>
    <property type="evidence" value="ECO:0007669"/>
    <property type="project" value="TreeGrafter"/>
</dbReference>
<dbReference type="GO" id="GO:0044781">
    <property type="term" value="P:bacterial-type flagellum organization"/>
    <property type="evidence" value="ECO:0007669"/>
    <property type="project" value="UniProtKB-KW"/>
</dbReference>
<dbReference type="GO" id="GO:0030254">
    <property type="term" value="P:protein secretion by the type III secretion system"/>
    <property type="evidence" value="ECO:0007669"/>
    <property type="project" value="InterPro"/>
</dbReference>
<dbReference type="CDD" id="cd01136">
    <property type="entry name" value="ATPase_flagellum-secretory_path_III"/>
    <property type="match status" value="1"/>
</dbReference>
<dbReference type="FunFam" id="3.40.50.12240:FF:000002">
    <property type="entry name" value="Flagellum-specific ATP synthase FliI"/>
    <property type="match status" value="1"/>
</dbReference>
<dbReference type="Gene3D" id="3.40.50.12240">
    <property type="match status" value="1"/>
</dbReference>
<dbReference type="InterPro" id="IPR003593">
    <property type="entry name" value="AAA+_ATPase"/>
</dbReference>
<dbReference type="InterPro" id="IPR020003">
    <property type="entry name" value="ATPase_a/bsu_AS"/>
</dbReference>
<dbReference type="InterPro" id="IPR050053">
    <property type="entry name" value="ATPase_alpha/beta_chains"/>
</dbReference>
<dbReference type="InterPro" id="IPR000194">
    <property type="entry name" value="ATPase_F1/V1/A1_a/bsu_nucl-bd"/>
</dbReference>
<dbReference type="InterPro" id="IPR005714">
    <property type="entry name" value="ATPase_T3SS_FliI/YscN"/>
</dbReference>
<dbReference type="InterPro" id="IPR022426">
    <property type="entry name" value="FliI_clade3"/>
</dbReference>
<dbReference type="InterPro" id="IPR027417">
    <property type="entry name" value="P-loop_NTPase"/>
</dbReference>
<dbReference type="InterPro" id="IPR040627">
    <property type="entry name" value="T3SS_ATPase_C"/>
</dbReference>
<dbReference type="NCBIfam" id="TIGR03498">
    <property type="entry name" value="FliI_clade3"/>
    <property type="match status" value="1"/>
</dbReference>
<dbReference type="NCBIfam" id="TIGR01026">
    <property type="entry name" value="fliI_yscN"/>
    <property type="match status" value="1"/>
</dbReference>
<dbReference type="PANTHER" id="PTHR15184">
    <property type="entry name" value="ATP SYNTHASE"/>
    <property type="match status" value="1"/>
</dbReference>
<dbReference type="PANTHER" id="PTHR15184:SF9">
    <property type="entry name" value="SPI-1 TYPE 3 SECRETION SYSTEM ATPASE"/>
    <property type="match status" value="1"/>
</dbReference>
<dbReference type="Pfam" id="PF00006">
    <property type="entry name" value="ATP-synt_ab"/>
    <property type="match status" value="1"/>
</dbReference>
<dbReference type="Pfam" id="PF18269">
    <property type="entry name" value="T3SS_ATPase_C"/>
    <property type="match status" value="1"/>
</dbReference>
<dbReference type="SMART" id="SM00382">
    <property type="entry name" value="AAA"/>
    <property type="match status" value="1"/>
</dbReference>
<dbReference type="SUPFAM" id="SSF52540">
    <property type="entry name" value="P-loop containing nucleoside triphosphate hydrolases"/>
    <property type="match status" value="1"/>
</dbReference>
<dbReference type="PROSITE" id="PS00152">
    <property type="entry name" value="ATPASE_ALPHA_BETA"/>
    <property type="match status" value="1"/>
</dbReference>
<name>FLII_RHIME</name>
<gene>
    <name type="primary">fliI</name>
    <name type="ordered locus">R00657</name>
    <name type="ORF">SMc03025</name>
</gene>
<accession>O54249</accession>
<accession>P96996</accession>
<proteinExistence type="inferred from homology"/>
<feature type="chain" id="PRO_0000144698" description="Flagellum-specific ATP synthase">
    <location>
        <begin position="1"/>
        <end position="467"/>
    </location>
</feature>
<feature type="binding site" evidence="1">
    <location>
        <begin position="180"/>
        <end position="187"/>
    </location>
    <ligand>
        <name>ATP</name>
        <dbReference type="ChEBI" id="CHEBI:30616"/>
    </ligand>
</feature>
<feature type="sequence conflict" description="In Ref. 4; AAB48835." evidence="3" ref="4">
    <original>ARE</original>
    <variation>RAQ</variation>
    <location>
        <begin position="2"/>
        <end position="4"/>
    </location>
</feature>
<feature type="sequence conflict" description="In Ref. 4; AAB48835." evidence="3" ref="4">
    <original>TATSTSL</original>
    <variation>ICNIDVV</variation>
    <location>
        <begin position="9"/>
        <end position="15"/>
    </location>
</feature>
<feature type="sequence conflict" description="In Ref. 1; CAA11957." evidence="3" ref="1">
    <original>T</original>
    <variation>A</variation>
    <location>
        <position position="66"/>
    </location>
</feature>
<feature type="sequence conflict" description="In Ref. 4; AAB48835." evidence="3" ref="4">
    <original>F</original>
    <variation>L</variation>
    <location>
        <position position="167"/>
    </location>
</feature>
<feature type="sequence conflict" description="In Ref. 4; AAB48835." evidence="3" ref="4">
    <original>Q</original>
    <variation>R</variation>
    <location>
        <position position="174"/>
    </location>
</feature>
<feature type="sequence conflict" description="In Ref. 4; AAB48835." evidence="3" ref="4">
    <original>G</original>
    <variation>A</variation>
    <location>
        <position position="183"/>
    </location>
</feature>
<organism>
    <name type="scientific">Rhizobium meliloti (strain 1021)</name>
    <name type="common">Ensifer meliloti</name>
    <name type="synonym">Sinorhizobium meliloti</name>
    <dbReference type="NCBI Taxonomy" id="266834"/>
    <lineage>
        <taxon>Bacteria</taxon>
        <taxon>Pseudomonadati</taxon>
        <taxon>Pseudomonadota</taxon>
        <taxon>Alphaproteobacteria</taxon>
        <taxon>Hyphomicrobiales</taxon>
        <taxon>Rhizobiaceae</taxon>
        <taxon>Sinorhizobium/Ensifer group</taxon>
        <taxon>Sinorhizobium</taxon>
    </lineage>
</organism>
<evidence type="ECO:0000255" key="1"/>
<evidence type="ECO:0000255" key="2">
    <source>
        <dbReference type="PROSITE-ProRule" id="PRU10106"/>
    </source>
</evidence>
<evidence type="ECO:0000305" key="3"/>
<sequence>MAREAAEKTATSTSLAALAGLVERYANPDFAIAPGGHVQTISPGHYTVSGLSRHVRLGDFVAHKSTTGTHLGEVVRVEPERVVVCPIEPGDPIGIHDVVIRKGAFRIAPTDNWCGRTINALAEPIDGLGALLQGDIRRSIANTAPPSMTRKRVEQGFRTGVRAIDIFSPLCLGQRLGIFAGSGVGKSTLLSMLARADAFDKVVIALVGERGREVREFIEDTLGDNLSKSVAVVATSDESPMLRKMAPLTAVTIAEHYRDKGDNVLLIVDSVTRFAHAIREVATAAGEPPIARGYPASVFTELPRLLERAGPGAEGAGTITAIISILVDGDNHNDPVADSARGILDGHIVLDRSLAEEGRYPPVNPLASISRLARKAWTPDQEKLVARLKSLIHRFEETRDLRLIGGYRPGGDADLDMAIKQVPVIYDVLKQMPGERPAFDAFTDLANALKAAAMGNQPGAAGLRGRG</sequence>
<comment type="function">
    <text>Probable catalytic subunit of a protein translocase for flagellum-specific export, or a proton translocase involved in local circuits at the flagellum.</text>
</comment>
<comment type="catalytic activity">
    <reaction evidence="2">
        <text>ATP + H2O + 4 H(+)(in) = ADP + phosphate + 5 H(+)(out)</text>
        <dbReference type="Rhea" id="RHEA:57720"/>
        <dbReference type="ChEBI" id="CHEBI:15377"/>
        <dbReference type="ChEBI" id="CHEBI:15378"/>
        <dbReference type="ChEBI" id="CHEBI:30616"/>
        <dbReference type="ChEBI" id="CHEBI:43474"/>
        <dbReference type="ChEBI" id="CHEBI:456216"/>
        <dbReference type="EC" id="7.1.2.2"/>
    </reaction>
</comment>
<comment type="subcellular location">
    <subcellularLocation>
        <location evidence="3">Cytoplasm</location>
    </subcellularLocation>
</comment>
<comment type="similarity">
    <text evidence="3">Belongs to the ATPase alpha/beta chains family.</text>
</comment>
<protein>
    <recommendedName>
        <fullName>Flagellum-specific ATP synthase</fullName>
        <ecNumber>7.1.2.2</ecNumber>
    </recommendedName>
</protein>
<keyword id="KW-0066">ATP synthesis</keyword>
<keyword id="KW-0067">ATP-binding</keyword>
<keyword id="KW-1005">Bacterial flagellum biogenesis</keyword>
<keyword id="KW-1006">Bacterial flagellum protein export</keyword>
<keyword id="KW-0963">Cytoplasm</keyword>
<keyword id="KW-0375">Hydrogen ion transport</keyword>
<keyword id="KW-0406">Ion transport</keyword>
<keyword id="KW-0547">Nucleotide-binding</keyword>
<keyword id="KW-0653">Protein transport</keyword>
<keyword id="KW-1185">Reference proteome</keyword>
<keyword id="KW-1278">Translocase</keyword>
<keyword id="KW-0813">Transport</keyword>